<proteinExistence type="inferred from homology"/>
<name>RNC_SULNB</name>
<feature type="chain" id="PRO_1000075842" description="Ribonuclease 3">
    <location>
        <begin position="1"/>
        <end position="223"/>
    </location>
</feature>
<feature type="domain" description="RNase III" evidence="1">
    <location>
        <begin position="4"/>
        <end position="127"/>
    </location>
</feature>
<feature type="domain" description="DRBM" evidence="1">
    <location>
        <begin position="154"/>
        <end position="223"/>
    </location>
</feature>
<feature type="active site" evidence="1">
    <location>
        <position position="44"/>
    </location>
</feature>
<feature type="active site" evidence="1">
    <location>
        <position position="116"/>
    </location>
</feature>
<feature type="binding site" evidence="1">
    <location>
        <position position="40"/>
    </location>
    <ligand>
        <name>Mg(2+)</name>
        <dbReference type="ChEBI" id="CHEBI:18420"/>
    </ligand>
</feature>
<feature type="binding site" evidence="1">
    <location>
        <position position="113"/>
    </location>
    <ligand>
        <name>Mg(2+)</name>
        <dbReference type="ChEBI" id="CHEBI:18420"/>
    </ligand>
</feature>
<feature type="binding site" evidence="1">
    <location>
        <position position="116"/>
    </location>
    <ligand>
        <name>Mg(2+)</name>
        <dbReference type="ChEBI" id="CHEBI:18420"/>
    </ligand>
</feature>
<accession>A6QCJ0</accession>
<organism>
    <name type="scientific">Sulfurovum sp. (strain NBC37-1)</name>
    <dbReference type="NCBI Taxonomy" id="387093"/>
    <lineage>
        <taxon>Bacteria</taxon>
        <taxon>Pseudomonadati</taxon>
        <taxon>Campylobacterota</taxon>
        <taxon>Epsilonproteobacteria</taxon>
        <taxon>Campylobacterales</taxon>
        <taxon>Sulfurovaceae</taxon>
        <taxon>Sulfurovum</taxon>
    </lineage>
</organism>
<gene>
    <name evidence="1" type="primary">rnc</name>
    <name type="ordered locus">SUN_2259</name>
</gene>
<dbReference type="EC" id="3.1.26.3" evidence="1"/>
<dbReference type="EMBL" id="AP009179">
    <property type="protein sequence ID" value="BAF73199.1"/>
    <property type="molecule type" value="Genomic_DNA"/>
</dbReference>
<dbReference type="RefSeq" id="WP_012084037.1">
    <property type="nucleotide sequence ID" value="NC_009663.1"/>
</dbReference>
<dbReference type="SMR" id="A6QCJ0"/>
<dbReference type="STRING" id="387093.SUN_2259"/>
<dbReference type="KEGG" id="sun:SUN_2259"/>
<dbReference type="eggNOG" id="COG0571">
    <property type="taxonomic scope" value="Bacteria"/>
</dbReference>
<dbReference type="HOGENOM" id="CLU_000907_1_3_7"/>
<dbReference type="OrthoDB" id="9805026at2"/>
<dbReference type="Proteomes" id="UP000006378">
    <property type="component" value="Chromosome"/>
</dbReference>
<dbReference type="GO" id="GO:0005737">
    <property type="term" value="C:cytoplasm"/>
    <property type="evidence" value="ECO:0007669"/>
    <property type="project" value="UniProtKB-SubCell"/>
</dbReference>
<dbReference type="GO" id="GO:0003725">
    <property type="term" value="F:double-stranded RNA binding"/>
    <property type="evidence" value="ECO:0007669"/>
    <property type="project" value="TreeGrafter"/>
</dbReference>
<dbReference type="GO" id="GO:0046872">
    <property type="term" value="F:metal ion binding"/>
    <property type="evidence" value="ECO:0007669"/>
    <property type="project" value="UniProtKB-KW"/>
</dbReference>
<dbReference type="GO" id="GO:0004525">
    <property type="term" value="F:ribonuclease III activity"/>
    <property type="evidence" value="ECO:0007669"/>
    <property type="project" value="UniProtKB-UniRule"/>
</dbReference>
<dbReference type="GO" id="GO:0019843">
    <property type="term" value="F:rRNA binding"/>
    <property type="evidence" value="ECO:0007669"/>
    <property type="project" value="UniProtKB-KW"/>
</dbReference>
<dbReference type="GO" id="GO:0006397">
    <property type="term" value="P:mRNA processing"/>
    <property type="evidence" value="ECO:0007669"/>
    <property type="project" value="UniProtKB-UniRule"/>
</dbReference>
<dbReference type="GO" id="GO:0010468">
    <property type="term" value="P:regulation of gene expression"/>
    <property type="evidence" value="ECO:0007669"/>
    <property type="project" value="TreeGrafter"/>
</dbReference>
<dbReference type="GO" id="GO:0006364">
    <property type="term" value="P:rRNA processing"/>
    <property type="evidence" value="ECO:0007669"/>
    <property type="project" value="UniProtKB-UniRule"/>
</dbReference>
<dbReference type="GO" id="GO:0008033">
    <property type="term" value="P:tRNA processing"/>
    <property type="evidence" value="ECO:0007669"/>
    <property type="project" value="UniProtKB-KW"/>
</dbReference>
<dbReference type="CDD" id="cd10845">
    <property type="entry name" value="DSRM_RNAse_III_family"/>
    <property type="match status" value="1"/>
</dbReference>
<dbReference type="CDD" id="cd00593">
    <property type="entry name" value="RIBOc"/>
    <property type="match status" value="1"/>
</dbReference>
<dbReference type="FunFam" id="1.10.1520.10:FF:000001">
    <property type="entry name" value="Ribonuclease 3"/>
    <property type="match status" value="1"/>
</dbReference>
<dbReference type="FunFam" id="3.30.160.20:FF:000003">
    <property type="entry name" value="Ribonuclease 3"/>
    <property type="match status" value="1"/>
</dbReference>
<dbReference type="Gene3D" id="3.30.160.20">
    <property type="match status" value="1"/>
</dbReference>
<dbReference type="Gene3D" id="1.10.1520.10">
    <property type="entry name" value="Ribonuclease III domain"/>
    <property type="match status" value="1"/>
</dbReference>
<dbReference type="HAMAP" id="MF_00104">
    <property type="entry name" value="RNase_III"/>
    <property type="match status" value="1"/>
</dbReference>
<dbReference type="InterPro" id="IPR014720">
    <property type="entry name" value="dsRBD_dom"/>
</dbReference>
<dbReference type="InterPro" id="IPR011907">
    <property type="entry name" value="RNase_III"/>
</dbReference>
<dbReference type="InterPro" id="IPR000999">
    <property type="entry name" value="RNase_III_dom"/>
</dbReference>
<dbReference type="InterPro" id="IPR036389">
    <property type="entry name" value="RNase_III_sf"/>
</dbReference>
<dbReference type="NCBIfam" id="TIGR02191">
    <property type="entry name" value="RNaseIII"/>
    <property type="match status" value="1"/>
</dbReference>
<dbReference type="PANTHER" id="PTHR11207:SF0">
    <property type="entry name" value="RIBONUCLEASE 3"/>
    <property type="match status" value="1"/>
</dbReference>
<dbReference type="PANTHER" id="PTHR11207">
    <property type="entry name" value="RIBONUCLEASE III"/>
    <property type="match status" value="1"/>
</dbReference>
<dbReference type="Pfam" id="PF00035">
    <property type="entry name" value="dsrm"/>
    <property type="match status" value="1"/>
</dbReference>
<dbReference type="Pfam" id="PF14622">
    <property type="entry name" value="Ribonucleas_3_3"/>
    <property type="match status" value="1"/>
</dbReference>
<dbReference type="SMART" id="SM00358">
    <property type="entry name" value="DSRM"/>
    <property type="match status" value="1"/>
</dbReference>
<dbReference type="SMART" id="SM00535">
    <property type="entry name" value="RIBOc"/>
    <property type="match status" value="1"/>
</dbReference>
<dbReference type="SUPFAM" id="SSF54768">
    <property type="entry name" value="dsRNA-binding domain-like"/>
    <property type="match status" value="1"/>
</dbReference>
<dbReference type="SUPFAM" id="SSF69065">
    <property type="entry name" value="RNase III domain-like"/>
    <property type="match status" value="1"/>
</dbReference>
<dbReference type="PROSITE" id="PS50137">
    <property type="entry name" value="DS_RBD"/>
    <property type="match status" value="1"/>
</dbReference>
<dbReference type="PROSITE" id="PS00517">
    <property type="entry name" value="RNASE_3_1"/>
    <property type="match status" value="1"/>
</dbReference>
<dbReference type="PROSITE" id="PS50142">
    <property type="entry name" value="RNASE_3_2"/>
    <property type="match status" value="1"/>
</dbReference>
<evidence type="ECO:0000255" key="1">
    <source>
        <dbReference type="HAMAP-Rule" id="MF_00104"/>
    </source>
</evidence>
<keyword id="KW-0963">Cytoplasm</keyword>
<keyword id="KW-0255">Endonuclease</keyword>
<keyword id="KW-0378">Hydrolase</keyword>
<keyword id="KW-0460">Magnesium</keyword>
<keyword id="KW-0479">Metal-binding</keyword>
<keyword id="KW-0507">mRNA processing</keyword>
<keyword id="KW-0540">Nuclease</keyword>
<keyword id="KW-0694">RNA-binding</keyword>
<keyword id="KW-0698">rRNA processing</keyword>
<keyword id="KW-0699">rRNA-binding</keyword>
<keyword id="KW-0819">tRNA processing</keyword>
<comment type="function">
    <text evidence="1">Digests double-stranded RNA. Involved in the processing of primary rRNA transcript to yield the immediate precursors to the large and small rRNAs (23S and 16S). Processes some mRNAs, and tRNAs when they are encoded in the rRNA operon. Processes pre-crRNA and tracrRNA of type II CRISPR loci if present in the organism.</text>
</comment>
<comment type="catalytic activity">
    <reaction evidence="1">
        <text>Endonucleolytic cleavage to 5'-phosphomonoester.</text>
        <dbReference type="EC" id="3.1.26.3"/>
    </reaction>
</comment>
<comment type="cofactor">
    <cofactor evidence="1">
        <name>Mg(2+)</name>
        <dbReference type="ChEBI" id="CHEBI:18420"/>
    </cofactor>
</comment>
<comment type="subunit">
    <text evidence="1">Homodimer.</text>
</comment>
<comment type="subcellular location">
    <subcellularLocation>
        <location evidence="1">Cytoplasm</location>
    </subcellularLocation>
</comment>
<comment type="similarity">
    <text evidence="1">Belongs to the ribonuclease III family.</text>
</comment>
<protein>
    <recommendedName>
        <fullName evidence="1">Ribonuclease 3</fullName>
        <ecNumber evidence="1">3.1.26.3</ecNumber>
    </recommendedName>
    <alternativeName>
        <fullName evidence="1">Ribonuclease III</fullName>
        <shortName evidence="1">RNase III</shortName>
    </alternativeName>
</protein>
<reference key="1">
    <citation type="journal article" date="2007" name="Proc. Natl. Acad. Sci. U.S.A.">
        <title>Deep-sea vent epsilon-proteobacterial genomes provide insights into emergence of pathogens.</title>
        <authorList>
            <person name="Nakagawa S."/>
            <person name="Takaki Y."/>
            <person name="Shimamura S."/>
            <person name="Reysenbach A.-L."/>
            <person name="Takai K."/>
            <person name="Horikoshi K."/>
        </authorList>
    </citation>
    <scope>NUCLEOTIDE SEQUENCE [LARGE SCALE GENOMIC DNA]</scope>
    <source>
        <strain>NBC37-1</strain>
    </source>
</reference>
<sequence>MNDYSQLEKRLNYTFKDKQLIIEALTHKSYKKPYNNERLEFLGDAVLDLIVGEYLFKKFPKSDEGILSKIRASLVNESGFTLLARKIDLGSYIYLSLAEENNNGRDKPSLLSNAFEAIIGAVYLEAGLDTAKEISIKLLEECHPKIDLQSLSKDYKTALQELTQATHAVTPGYEMLGSSGPDHKKEFEIAVTLDNKTIATAKGKSKKDAQQKAAKIALEALKK</sequence>